<proteinExistence type="evidence at protein level"/>
<name>CCB12_ARATH</name>
<organism>
    <name type="scientific">Arabidopsis thaliana</name>
    <name type="common">Mouse-ear cress</name>
    <dbReference type="NCBI Taxonomy" id="3702"/>
    <lineage>
        <taxon>Eukaryota</taxon>
        <taxon>Viridiplantae</taxon>
        <taxon>Streptophyta</taxon>
        <taxon>Embryophyta</taxon>
        <taxon>Tracheophyta</taxon>
        <taxon>Spermatophyta</taxon>
        <taxon>Magnoliopsida</taxon>
        <taxon>eudicotyledons</taxon>
        <taxon>Gunneridae</taxon>
        <taxon>Pentapetalae</taxon>
        <taxon>rosids</taxon>
        <taxon>malvids</taxon>
        <taxon>Brassicales</taxon>
        <taxon>Brassicaceae</taxon>
        <taxon>Camelineae</taxon>
        <taxon>Arabidopsis</taxon>
    </lineage>
</organism>
<sequence>MATRANVPEQVRGAPLVDGLKIQNKNGAVKSRRALGDIGNLVSVPGVQGGKAQPPINRPITRSFRAQLLANAQLERKPINGDNKVPALGPKRQPLAARNPEAQRAVQKKNLVVKQQTKPVEVIETKKEVTKKEVAMSPKNKKVTYSSVLSARSKAACGIVNKPKIIDIDESDKDNHLAAVEYVDDMYSFYKEVEKESQPKMYMHIQTEMNEKMRAILIDWLLEVHIKFELNLETLYLTVNIIDRFLSVKAVPKRELQLVGISALLIASKYEEIWPPQVNDLVYVTDNAYSSRQILVMEKAILGNLEWYLTVPTQYVFLVRFIKASMSDPEMENMVHFLAELGMMHYDTLTFCPSMLAASAVYTARCSLNKSPAWTDTLQFHTGYTESEIMDCSKLLAFLHSRCGESRLRAVYKKYSKAENGGVAMVSPAKSLLSAAADWKKPVSS</sequence>
<evidence type="ECO:0000269" key="1">
    <source>
    </source>
</evidence>
<evidence type="ECO:0000269" key="2">
    <source>
    </source>
</evidence>
<evidence type="ECO:0000269" key="3">
    <source>
    </source>
</evidence>
<evidence type="ECO:0000269" key="4">
    <source>
    </source>
</evidence>
<evidence type="ECO:0000305" key="5"/>
<gene>
    <name type="primary">CYCB1-2</name>
    <name type="synonym">CYC1B</name>
    <name type="ordered locus">At5g06150</name>
    <name type="ORF">MBL20.2</name>
</gene>
<reference key="1">
    <citation type="journal article" date="1994" name="Biochim. Biophys. Acta">
        <title>Cloning of a family of cyclins from Arabidopsis thaliana.</title>
        <authorList>
            <person name="Day I.S."/>
            <person name="Reddy A.S."/>
        </authorList>
    </citation>
    <scope>NUCLEOTIDE SEQUENCE [MRNA]</scope>
    <source>
        <tissue>Flower meristem</tissue>
    </source>
</reference>
<reference key="2">
    <citation type="journal article" date="1996" name="Plant Mol. Biol.">
        <title>Isolation of a new mitotic-like cyclin from Arabidopsis: complementation of a yeast cyclin mutant with a plant cyclin.</title>
        <authorList>
            <person name="Day I.S."/>
            <person name="Reddy A.S."/>
            <person name="Golovkin M."/>
        </authorList>
    </citation>
    <scope>NUCLEOTIDE SEQUENCE [MRNA]</scope>
</reference>
<reference key="3">
    <citation type="submission" date="2000-06" db="EMBL/GenBank/DDBJ databases">
        <title>Structural analysis of Arabidopsis thaliana chromosome 5. XI.</title>
        <authorList>
            <person name="Kaneko T."/>
            <person name="Katoh T."/>
            <person name="Asamizu E."/>
            <person name="Sato S."/>
            <person name="Nakamura Y."/>
            <person name="Kotani H."/>
            <person name="Tabata S."/>
        </authorList>
    </citation>
    <scope>NUCLEOTIDE SEQUENCE [LARGE SCALE GENOMIC DNA]</scope>
    <source>
        <strain>cv. Columbia</strain>
    </source>
</reference>
<reference key="4">
    <citation type="journal article" date="2017" name="Plant J.">
        <title>Araport11: a complete reannotation of the Arabidopsis thaliana reference genome.</title>
        <authorList>
            <person name="Cheng C.Y."/>
            <person name="Krishnakumar V."/>
            <person name="Chan A.P."/>
            <person name="Thibaud-Nissen F."/>
            <person name="Schobel S."/>
            <person name="Town C.D."/>
        </authorList>
    </citation>
    <scope>GENOME REANNOTATION</scope>
    <source>
        <strain>cv. Columbia</strain>
    </source>
</reference>
<reference key="5">
    <citation type="journal article" date="1998" name="Plant Mol. Biol.">
        <title>Isolation and characterization of two cyclin-like cDNAs from Arabidopsis.</title>
        <authorList>
            <person name="Day I.S."/>
            <person name="Reddy A.S."/>
        </authorList>
    </citation>
    <scope>TISSUE SPECIFICITY</scope>
</reference>
<reference key="6">
    <citation type="journal article" date="2004" name="Plant Physiol.">
        <title>Cell cycle modulation in the response of the primary root of Arabidopsis to salt stress.</title>
        <authorList>
            <person name="West G."/>
            <person name="Inze D."/>
            <person name="Beemster G.T.S."/>
        </authorList>
    </citation>
    <scope>INDUCTION</scope>
</reference>
<reference key="7">
    <citation type="journal article" date="2002" name="Curr. Biol.">
        <title>Ectopic B-type cyclin expression induces mitotic cycles in endoreduplicating Arabidopsis trichomes.</title>
        <authorList>
            <person name="Schnittger A."/>
            <person name="Schoebinger U."/>
            <person name="Stierhof Y.-D."/>
            <person name="Huelskamp M."/>
        </authorList>
    </citation>
    <scope>FUNCTION</scope>
</reference>
<reference key="8">
    <citation type="journal article" date="2004" name="Plant Physiol.">
        <title>Genome-wide analysis of the cyclin family in Arabidopsis and comparative phylogenetic analysis of plant cyclin-like proteins.</title>
        <authorList>
            <person name="Wang G."/>
            <person name="Kong H."/>
            <person name="Sun Y."/>
            <person name="Zhang X."/>
            <person name="Zhang W."/>
            <person name="Altman N."/>
            <person name="dePamphilis C.W."/>
            <person name="Ma H."/>
        </authorList>
    </citation>
    <scope>GENE FAMILY</scope>
    <scope>NOMENCLATURE</scope>
</reference>
<reference key="9">
    <citation type="journal article" date="2005" name="Cell Cycle">
        <title>Arabidopsis anaphase-promoting complexes: multiple activators and wide range of substrates might keep APC perpetually busy.</title>
        <authorList>
            <person name="Fueloep K."/>
            <person name="Tarayre S."/>
            <person name="Kelemen Z."/>
            <person name="Horvath G."/>
            <person name="Kevei Z."/>
            <person name="Nikovics K."/>
            <person name="Bako L."/>
            <person name="Brown S."/>
            <person name="Kondorosi A."/>
            <person name="Kondorosi E."/>
        </authorList>
    </citation>
    <scope>DEVELOPMENTAL STAGE</scope>
    <scope>INTERACTION WITH FZR1; FZR2 AND FZR3</scope>
</reference>
<comment type="function">
    <text evidence="1">May induce mitotic cell division.</text>
</comment>
<comment type="subunit">
    <text evidence="3">Interacts with FZR2/CCS52A1, FZR1/CCS52A2 and FZR3/CCS52B.</text>
</comment>
<comment type="tissue specificity">
    <text evidence="4">Expressed in roots, stems and flowers.</text>
</comment>
<comment type="developmental stage">
    <text evidence="3">Expressed during G2/M and M phases.</text>
</comment>
<comment type="induction">
    <text evidence="2">Transiently down-regulated by salt stress in roots.</text>
</comment>
<comment type="similarity">
    <text evidence="5">Belongs to the cyclin family. Cyclin AB subfamily.</text>
</comment>
<protein>
    <recommendedName>
        <fullName>Cyclin-B1-2</fullName>
    </recommendedName>
    <alternativeName>
        <fullName>Cyc1b-At</fullName>
    </alternativeName>
    <alternativeName>
        <fullName>Cyclin-1b</fullName>
    </alternativeName>
    <alternativeName>
        <fullName>G2/mitotic-specific cyclin-B1-2</fullName>
        <shortName>CycB1;2</shortName>
    </alternativeName>
</protein>
<feature type="chain" id="PRO_0000287004" description="Cyclin-B1-2">
    <location>
        <begin position="1"/>
        <end position="445"/>
    </location>
</feature>
<feature type="sequence conflict" description="In Ref. 1; AAB02028." evidence="5" ref="1">
    <original>K</original>
    <variation>R</variation>
    <location>
        <position position="200"/>
    </location>
</feature>
<feature type="sequence conflict" description="In Ref. 1; AAB02028." evidence="5" ref="1">
    <original>L</original>
    <variation>Q</variation>
    <location>
        <position position="356"/>
    </location>
</feature>
<keyword id="KW-0131">Cell cycle</keyword>
<keyword id="KW-0132">Cell division</keyword>
<keyword id="KW-0195">Cyclin</keyword>
<keyword id="KW-0498">Mitosis</keyword>
<keyword id="KW-1185">Reference proteome</keyword>
<dbReference type="EMBL" id="L27223">
    <property type="protein sequence ID" value="AAB02028.1"/>
    <property type="molecule type" value="mRNA"/>
</dbReference>
<dbReference type="EMBL" id="AP002544">
    <property type="protein sequence ID" value="BAB09680.1"/>
    <property type="molecule type" value="Genomic_DNA"/>
</dbReference>
<dbReference type="EMBL" id="CP002688">
    <property type="protein sequence ID" value="AED90976.1"/>
    <property type="molecule type" value="Genomic_DNA"/>
</dbReference>
<dbReference type="PIR" id="S65734">
    <property type="entry name" value="S65734"/>
</dbReference>
<dbReference type="SMR" id="Q39067"/>
<dbReference type="BioGRID" id="15781">
    <property type="interactions" value="19"/>
</dbReference>
<dbReference type="FunCoup" id="Q39067">
    <property type="interactions" value="1387"/>
</dbReference>
<dbReference type="IntAct" id="Q39067">
    <property type="interactions" value="15"/>
</dbReference>
<dbReference type="STRING" id="3702.Q39067"/>
<dbReference type="iPTMnet" id="Q39067"/>
<dbReference type="PaxDb" id="3702-AT5G06150.1"/>
<dbReference type="ProteomicsDB" id="223962"/>
<dbReference type="DNASU" id="830502"/>
<dbReference type="EnsemblPlants" id="AT5G06150.1">
    <property type="protein sequence ID" value="AT5G06150.1"/>
    <property type="gene ID" value="AT5G06150"/>
</dbReference>
<dbReference type="GeneID" id="830502"/>
<dbReference type="Gramene" id="AT5G06150.1">
    <property type="protein sequence ID" value="AT5G06150.1"/>
    <property type="gene ID" value="AT5G06150"/>
</dbReference>
<dbReference type="KEGG" id="ath:AT5G06150"/>
<dbReference type="Araport" id="AT5G06150"/>
<dbReference type="TAIR" id="AT5G06150">
    <property type="gene designation" value="CYC1BAT"/>
</dbReference>
<dbReference type="eggNOG" id="KOG0653">
    <property type="taxonomic scope" value="Eukaryota"/>
</dbReference>
<dbReference type="HOGENOM" id="CLU_020695_0_3_1"/>
<dbReference type="InParanoid" id="Q39067"/>
<dbReference type="OMA" id="VEHESRP"/>
<dbReference type="OrthoDB" id="5590282at2759"/>
<dbReference type="PhylomeDB" id="Q39067"/>
<dbReference type="PRO" id="PR:Q39067"/>
<dbReference type="Proteomes" id="UP000006548">
    <property type="component" value="Chromosome 5"/>
</dbReference>
<dbReference type="ExpressionAtlas" id="Q39067">
    <property type="expression patterns" value="baseline and differential"/>
</dbReference>
<dbReference type="GO" id="GO:0005737">
    <property type="term" value="C:cytoplasm"/>
    <property type="evidence" value="ECO:0000314"/>
    <property type="project" value="TAIR"/>
</dbReference>
<dbReference type="GO" id="GO:0016538">
    <property type="term" value="F:cyclin-dependent protein serine/threonine kinase regulator activity"/>
    <property type="evidence" value="ECO:0007669"/>
    <property type="project" value="InterPro"/>
</dbReference>
<dbReference type="GO" id="GO:0051301">
    <property type="term" value="P:cell division"/>
    <property type="evidence" value="ECO:0007669"/>
    <property type="project" value="UniProtKB-KW"/>
</dbReference>
<dbReference type="GO" id="GO:0044772">
    <property type="term" value="P:mitotic cell cycle phase transition"/>
    <property type="evidence" value="ECO:0007669"/>
    <property type="project" value="InterPro"/>
</dbReference>
<dbReference type="GO" id="GO:0010332">
    <property type="term" value="P:response to gamma radiation"/>
    <property type="evidence" value="ECO:0000270"/>
    <property type="project" value="TAIR"/>
</dbReference>
<dbReference type="CDD" id="cd20567">
    <property type="entry name" value="CYCLIN_AtCycB-like_rpt1"/>
    <property type="match status" value="1"/>
</dbReference>
<dbReference type="CDD" id="cd20511">
    <property type="entry name" value="CYCLIN_AtCycB-like_rpt2"/>
    <property type="match status" value="1"/>
</dbReference>
<dbReference type="FunFam" id="1.10.472.10:FF:000001">
    <property type="entry name" value="G2/mitotic-specific cyclin"/>
    <property type="match status" value="1"/>
</dbReference>
<dbReference type="FunFam" id="1.10.472.10:FF:000032">
    <property type="entry name" value="G2/mitotic-specific cyclin-1"/>
    <property type="match status" value="1"/>
</dbReference>
<dbReference type="Gene3D" id="1.10.472.10">
    <property type="entry name" value="Cyclin-like"/>
    <property type="match status" value="2"/>
</dbReference>
<dbReference type="InterPro" id="IPR039361">
    <property type="entry name" value="Cyclin"/>
</dbReference>
<dbReference type="InterPro" id="IPR013763">
    <property type="entry name" value="Cyclin-like_dom"/>
</dbReference>
<dbReference type="InterPro" id="IPR036915">
    <property type="entry name" value="Cyclin-like_sf"/>
</dbReference>
<dbReference type="InterPro" id="IPR046965">
    <property type="entry name" value="Cyclin_A/B-like"/>
</dbReference>
<dbReference type="InterPro" id="IPR004367">
    <property type="entry name" value="Cyclin_C-dom"/>
</dbReference>
<dbReference type="InterPro" id="IPR006671">
    <property type="entry name" value="Cyclin_N"/>
</dbReference>
<dbReference type="InterPro" id="IPR048258">
    <property type="entry name" value="Cyclins_cyclin-box"/>
</dbReference>
<dbReference type="PANTHER" id="PTHR10177">
    <property type="entry name" value="CYCLINS"/>
    <property type="match status" value="1"/>
</dbReference>
<dbReference type="Pfam" id="PF02984">
    <property type="entry name" value="Cyclin_C"/>
    <property type="match status" value="1"/>
</dbReference>
<dbReference type="Pfam" id="PF00134">
    <property type="entry name" value="Cyclin_N"/>
    <property type="match status" value="1"/>
</dbReference>
<dbReference type="PIRSF" id="PIRSF001771">
    <property type="entry name" value="Cyclin_A_B_D_E"/>
    <property type="match status" value="1"/>
</dbReference>
<dbReference type="SMART" id="SM00385">
    <property type="entry name" value="CYCLIN"/>
    <property type="match status" value="2"/>
</dbReference>
<dbReference type="SMART" id="SM01332">
    <property type="entry name" value="Cyclin_C"/>
    <property type="match status" value="1"/>
</dbReference>
<dbReference type="SUPFAM" id="SSF47954">
    <property type="entry name" value="Cyclin-like"/>
    <property type="match status" value="2"/>
</dbReference>
<dbReference type="PROSITE" id="PS00292">
    <property type="entry name" value="CYCLINS"/>
    <property type="match status" value="1"/>
</dbReference>
<accession>Q39067</accession>
<accession>Q9FG02</accession>